<comment type="function">
    <text evidence="1">Catalyzes the NADPH-dependent reduction of 7-cyano-7-deazaguanine (preQ0) to 7-aminomethyl-7-deazaguanine (preQ1).</text>
</comment>
<comment type="catalytic activity">
    <reaction evidence="1">
        <text>7-aminomethyl-7-carbaguanine + 2 NADP(+) = 7-cyano-7-deazaguanine + 2 NADPH + 3 H(+)</text>
        <dbReference type="Rhea" id="RHEA:13409"/>
        <dbReference type="ChEBI" id="CHEBI:15378"/>
        <dbReference type="ChEBI" id="CHEBI:45075"/>
        <dbReference type="ChEBI" id="CHEBI:57783"/>
        <dbReference type="ChEBI" id="CHEBI:58349"/>
        <dbReference type="ChEBI" id="CHEBI:58703"/>
        <dbReference type="EC" id="1.7.1.13"/>
    </reaction>
</comment>
<comment type="pathway">
    <text evidence="1">tRNA modification; tRNA-queuosine biosynthesis.</text>
</comment>
<comment type="subcellular location">
    <subcellularLocation>
        <location evidence="1">Cytoplasm</location>
    </subcellularLocation>
</comment>
<comment type="similarity">
    <text evidence="1">Belongs to the GTP cyclohydrolase I family. QueF type 1 subfamily.</text>
</comment>
<comment type="sequence caution" evidence="2">
    <conflict type="erroneous initiation">
        <sequence resource="EMBL-CDS" id="ABC83858"/>
    </conflict>
</comment>
<feature type="chain" id="PRO_0000247678" description="NADPH-dependent 7-cyano-7-deazaguanine reductase">
    <location>
        <begin position="1"/>
        <end position="122"/>
    </location>
</feature>
<feature type="active site" description="Thioimide intermediate" evidence="1">
    <location>
        <position position="34"/>
    </location>
</feature>
<feature type="active site" description="Proton donor" evidence="1">
    <location>
        <position position="41"/>
    </location>
</feature>
<feature type="binding site" evidence="1">
    <location>
        <begin position="56"/>
        <end position="58"/>
    </location>
    <ligand>
        <name>substrate</name>
    </ligand>
</feature>
<feature type="binding site" evidence="1">
    <location>
        <begin position="75"/>
        <end position="76"/>
    </location>
    <ligand>
        <name>substrate</name>
    </ligand>
</feature>
<proteinExistence type="inferred from homology"/>
<sequence>MPTQPSRDLQTFPNPKPGRPFEIAMECPEFTCVCPMTGQPDFATIRLRYVPAERCVELKSLKLYLWSFRDEGTFHEAVTNRICDDLVAALAPRWIEVVGDFAVRGGIHTVVTARHGERPAGV</sequence>
<evidence type="ECO:0000255" key="1">
    <source>
        <dbReference type="HAMAP-Rule" id="MF_00818"/>
    </source>
</evidence>
<evidence type="ECO:0000305" key="2"/>
<keyword id="KW-0963">Cytoplasm</keyword>
<keyword id="KW-0521">NADP</keyword>
<keyword id="KW-0560">Oxidoreductase</keyword>
<keyword id="KW-0671">Queuosine biosynthesis</keyword>
<keyword id="KW-1185">Reference proteome</keyword>
<gene>
    <name evidence="1" type="primary">queF</name>
    <name type="ordered locus">Adeh_4094</name>
</gene>
<reference key="1">
    <citation type="submission" date="2006-01" db="EMBL/GenBank/DDBJ databases">
        <title>Complete sequence of Anaeromyxobacter dehalogenans 2CP-C.</title>
        <authorList>
            <person name="Copeland A."/>
            <person name="Lucas S."/>
            <person name="Lapidus A."/>
            <person name="Barry K."/>
            <person name="Detter J.C."/>
            <person name="Glavina T."/>
            <person name="Hammon N."/>
            <person name="Israni S."/>
            <person name="Pitluck S."/>
            <person name="Brettin T."/>
            <person name="Bruce D."/>
            <person name="Han C."/>
            <person name="Tapia R."/>
            <person name="Gilna P."/>
            <person name="Kiss H."/>
            <person name="Schmutz J."/>
            <person name="Larimer F."/>
            <person name="Land M."/>
            <person name="Kyrpides N."/>
            <person name="Anderson I."/>
            <person name="Sanford R.A."/>
            <person name="Ritalahti K.M."/>
            <person name="Thomas H.S."/>
            <person name="Kirby J.R."/>
            <person name="Zhulin I.B."/>
            <person name="Loeffler F.E."/>
            <person name="Richardson P."/>
        </authorList>
    </citation>
    <scope>NUCLEOTIDE SEQUENCE [LARGE SCALE GENOMIC DNA]</scope>
    <source>
        <strain>2CP-C</strain>
    </source>
</reference>
<organism>
    <name type="scientific">Anaeromyxobacter dehalogenans (strain 2CP-C)</name>
    <dbReference type="NCBI Taxonomy" id="290397"/>
    <lineage>
        <taxon>Bacteria</taxon>
        <taxon>Pseudomonadati</taxon>
        <taxon>Myxococcota</taxon>
        <taxon>Myxococcia</taxon>
        <taxon>Myxococcales</taxon>
        <taxon>Cystobacterineae</taxon>
        <taxon>Anaeromyxobacteraceae</taxon>
        <taxon>Anaeromyxobacter</taxon>
    </lineage>
</organism>
<dbReference type="EC" id="1.7.1.13" evidence="1"/>
<dbReference type="EMBL" id="CP000251">
    <property type="protein sequence ID" value="ABC83858.1"/>
    <property type="status" value="ALT_INIT"/>
    <property type="molecule type" value="Genomic_DNA"/>
</dbReference>
<dbReference type="RefSeq" id="WP_041453750.1">
    <property type="nucleotide sequence ID" value="NC_007760.1"/>
</dbReference>
<dbReference type="SMR" id="Q2IH01"/>
<dbReference type="STRING" id="290397.Adeh_4094"/>
<dbReference type="KEGG" id="ade:Adeh_4094"/>
<dbReference type="eggNOG" id="COG0780">
    <property type="taxonomic scope" value="Bacteria"/>
</dbReference>
<dbReference type="HOGENOM" id="CLU_102489_1_0_7"/>
<dbReference type="OrthoDB" id="9789995at2"/>
<dbReference type="UniPathway" id="UPA00392"/>
<dbReference type="Proteomes" id="UP000001935">
    <property type="component" value="Chromosome"/>
</dbReference>
<dbReference type="GO" id="GO:0005737">
    <property type="term" value="C:cytoplasm"/>
    <property type="evidence" value="ECO:0007669"/>
    <property type="project" value="UniProtKB-SubCell"/>
</dbReference>
<dbReference type="GO" id="GO:0033739">
    <property type="term" value="F:preQ1 synthase activity"/>
    <property type="evidence" value="ECO:0007669"/>
    <property type="project" value="UniProtKB-UniRule"/>
</dbReference>
<dbReference type="GO" id="GO:0008616">
    <property type="term" value="P:queuosine biosynthetic process"/>
    <property type="evidence" value="ECO:0007669"/>
    <property type="project" value="UniProtKB-UniRule"/>
</dbReference>
<dbReference type="GO" id="GO:0006400">
    <property type="term" value="P:tRNA modification"/>
    <property type="evidence" value="ECO:0007669"/>
    <property type="project" value="UniProtKB-UniRule"/>
</dbReference>
<dbReference type="Gene3D" id="3.30.1130.10">
    <property type="match status" value="1"/>
</dbReference>
<dbReference type="HAMAP" id="MF_00818">
    <property type="entry name" value="QueF_type1"/>
    <property type="match status" value="1"/>
</dbReference>
<dbReference type="InterPro" id="IPR043133">
    <property type="entry name" value="GTP-CH-I_C/QueF"/>
</dbReference>
<dbReference type="InterPro" id="IPR050084">
    <property type="entry name" value="NADPH_dep_7-cyano-7-deazaG_red"/>
</dbReference>
<dbReference type="InterPro" id="IPR029500">
    <property type="entry name" value="QueF"/>
</dbReference>
<dbReference type="InterPro" id="IPR016856">
    <property type="entry name" value="QueF_type1"/>
</dbReference>
<dbReference type="NCBIfam" id="TIGR03139">
    <property type="entry name" value="QueF-II"/>
    <property type="match status" value="1"/>
</dbReference>
<dbReference type="PANTHER" id="PTHR34354">
    <property type="entry name" value="NADPH-DEPENDENT 7-CYANO-7-DEAZAGUANINE REDUCTASE"/>
    <property type="match status" value="1"/>
</dbReference>
<dbReference type="PANTHER" id="PTHR34354:SF1">
    <property type="entry name" value="NADPH-DEPENDENT 7-CYANO-7-DEAZAGUANINE REDUCTASE"/>
    <property type="match status" value="1"/>
</dbReference>
<dbReference type="Pfam" id="PF14489">
    <property type="entry name" value="QueF"/>
    <property type="match status" value="1"/>
</dbReference>
<dbReference type="PIRSF" id="PIRSF027377">
    <property type="entry name" value="Nitrile_oxidored_QueF"/>
    <property type="match status" value="1"/>
</dbReference>
<dbReference type="SUPFAM" id="SSF55620">
    <property type="entry name" value="Tetrahydrobiopterin biosynthesis enzymes-like"/>
    <property type="match status" value="1"/>
</dbReference>
<protein>
    <recommendedName>
        <fullName evidence="1">NADPH-dependent 7-cyano-7-deazaguanine reductase</fullName>
        <ecNumber evidence="1">1.7.1.13</ecNumber>
    </recommendedName>
    <alternativeName>
        <fullName evidence="1">7-cyano-7-carbaguanine reductase</fullName>
    </alternativeName>
    <alternativeName>
        <fullName evidence="1">NADPH-dependent nitrile oxidoreductase</fullName>
    </alternativeName>
    <alternativeName>
        <fullName evidence="1">PreQ(0) reductase</fullName>
    </alternativeName>
</protein>
<accession>Q2IH01</accession>
<name>QUEF_ANADE</name>